<comment type="cofactor">
    <cofactor evidence="1">
        <name>thiamine diphosphate</name>
        <dbReference type="ChEBI" id="CHEBI:58937"/>
    </cofactor>
</comment>
<comment type="similarity">
    <text evidence="1">Belongs to the XFP family.</text>
</comment>
<evidence type="ECO:0000305" key="1"/>
<keyword id="KW-0002">3D-structure</keyword>
<keyword id="KW-0456">Lyase</keyword>
<keyword id="KW-1185">Reference proteome</keyword>
<keyword id="KW-0786">Thiamine pyrophosphate</keyword>
<proteinExistence type="inferred from homology"/>
<feature type="chain" id="PRO_0000193877" description="Probable phosphoketolase">
    <location>
        <begin position="1"/>
        <end position="822"/>
    </location>
</feature>
<name>PHK_LACLA</name>
<reference key="1">
    <citation type="journal article" date="2001" name="Genome Res.">
        <title>The complete genome sequence of the lactic acid bacterium Lactococcus lactis ssp. lactis IL1403.</title>
        <authorList>
            <person name="Bolotin A."/>
            <person name="Wincker P."/>
            <person name="Mauger S."/>
            <person name="Jaillon O."/>
            <person name="Malarme K."/>
            <person name="Weissenbach J."/>
            <person name="Ehrlich S.D."/>
            <person name="Sorokin A."/>
        </authorList>
    </citation>
    <scope>NUCLEOTIDE SEQUENCE [LARGE SCALE GENOMIC DNA]</scope>
    <source>
        <strain>IL1403</strain>
    </source>
</reference>
<dbReference type="EC" id="4.1.2.-"/>
<dbReference type="EMBL" id="AE005176">
    <property type="protein sequence ID" value="AAK05600.1"/>
    <property type="molecule type" value="Genomic_DNA"/>
</dbReference>
<dbReference type="PIR" id="F86812">
    <property type="entry name" value="F86812"/>
</dbReference>
<dbReference type="RefSeq" id="NP_267658.1">
    <property type="nucleotide sequence ID" value="NC_002662.1"/>
</dbReference>
<dbReference type="RefSeq" id="WP_010906007.1">
    <property type="nucleotide sequence ID" value="NC_002662.1"/>
</dbReference>
<dbReference type="PDB" id="6GUA">
    <property type="method" value="Other"/>
    <property type="resolution" value="1.95 A"/>
    <property type="chains" value="A/B/C/D/E/F/G/H=1-822"/>
</dbReference>
<dbReference type="PDBsum" id="6GUA"/>
<dbReference type="SASBDB" id="Q9CFH4"/>
<dbReference type="SMR" id="Q9CFH4"/>
<dbReference type="PaxDb" id="272623-L138230"/>
<dbReference type="EnsemblBacteria" id="AAK05600">
    <property type="protein sequence ID" value="AAK05600"/>
    <property type="gene ID" value="L138230"/>
</dbReference>
<dbReference type="KEGG" id="lla:L138230"/>
<dbReference type="PATRIC" id="fig|272623.7.peg.1612"/>
<dbReference type="eggNOG" id="COG3957">
    <property type="taxonomic scope" value="Bacteria"/>
</dbReference>
<dbReference type="HOGENOM" id="CLU_013954_2_0_9"/>
<dbReference type="OrthoDB" id="9768449at2"/>
<dbReference type="BRENDA" id="4.1.2.22">
    <property type="organism ID" value="2864"/>
</dbReference>
<dbReference type="BRENDA" id="4.1.2.9">
    <property type="organism ID" value="2864"/>
</dbReference>
<dbReference type="Proteomes" id="UP000002196">
    <property type="component" value="Chromosome"/>
</dbReference>
<dbReference type="GO" id="GO:0016832">
    <property type="term" value="F:aldehyde-lyase activity"/>
    <property type="evidence" value="ECO:0007669"/>
    <property type="project" value="UniProtKB-UniRule"/>
</dbReference>
<dbReference type="GO" id="GO:0005975">
    <property type="term" value="P:carbohydrate metabolic process"/>
    <property type="evidence" value="ECO:0007669"/>
    <property type="project" value="InterPro"/>
</dbReference>
<dbReference type="Gene3D" id="3.40.50.920">
    <property type="match status" value="1"/>
</dbReference>
<dbReference type="Gene3D" id="3.40.50.970">
    <property type="match status" value="2"/>
</dbReference>
<dbReference type="HAMAP" id="MF_01403">
    <property type="entry name" value="Phosphoketolase"/>
    <property type="match status" value="1"/>
</dbReference>
<dbReference type="InterPro" id="IPR023962">
    <property type="entry name" value="Phosphoketolase"/>
</dbReference>
<dbReference type="InterPro" id="IPR029061">
    <property type="entry name" value="THDP-binding"/>
</dbReference>
<dbReference type="InterPro" id="IPR009014">
    <property type="entry name" value="Transketo_C/PFOR_II"/>
</dbReference>
<dbReference type="InterPro" id="IPR005593">
    <property type="entry name" value="Xul5P/Fru6P_PKetolase"/>
</dbReference>
<dbReference type="InterPro" id="IPR018969">
    <property type="entry name" value="Xul5P/Fru6P_PKetolase_C"/>
</dbReference>
<dbReference type="InterPro" id="IPR019790">
    <property type="entry name" value="Xul5P/Fru6P_PKetolase_CS"/>
</dbReference>
<dbReference type="InterPro" id="IPR018970">
    <property type="entry name" value="Xul5P/Fru6P_PKetolase_N"/>
</dbReference>
<dbReference type="InterPro" id="IPR019789">
    <property type="entry name" value="Xul5P/Fru6P_PKetolase_ThDP_BS"/>
</dbReference>
<dbReference type="NCBIfam" id="NF003618">
    <property type="entry name" value="PRK05261.1-3"/>
    <property type="match status" value="1"/>
</dbReference>
<dbReference type="PANTHER" id="PTHR31273">
    <property type="entry name" value="PHOSPHOKETOLASE-RELATED"/>
    <property type="match status" value="1"/>
</dbReference>
<dbReference type="PANTHER" id="PTHR31273:SF0">
    <property type="entry name" value="PHOSPHOKETOLASE-RELATED"/>
    <property type="match status" value="1"/>
</dbReference>
<dbReference type="Pfam" id="PF03894">
    <property type="entry name" value="XFP"/>
    <property type="match status" value="1"/>
</dbReference>
<dbReference type="Pfam" id="PF09363">
    <property type="entry name" value="XFP_C"/>
    <property type="match status" value="1"/>
</dbReference>
<dbReference type="Pfam" id="PF09364">
    <property type="entry name" value="XFP_N"/>
    <property type="match status" value="1"/>
</dbReference>
<dbReference type="PIRSF" id="PIRSF017245">
    <property type="entry name" value="Phosphoketolase"/>
    <property type="match status" value="1"/>
</dbReference>
<dbReference type="SUPFAM" id="SSF52518">
    <property type="entry name" value="Thiamin diphosphate-binding fold (THDP-binding)"/>
    <property type="match status" value="2"/>
</dbReference>
<dbReference type="PROSITE" id="PS60002">
    <property type="entry name" value="PHOSPHOKETOLASE_1"/>
    <property type="match status" value="1"/>
</dbReference>
<dbReference type="PROSITE" id="PS60003">
    <property type="entry name" value="PHOSPHOKETOLASE_2"/>
    <property type="match status" value="1"/>
</dbReference>
<protein>
    <recommendedName>
        <fullName>Probable phosphoketolase</fullName>
        <ecNumber>4.1.2.-</ecNumber>
    </recommendedName>
</protein>
<sequence length="822" mass="93363">MTEYNSEAYLKKLDKWWRAATYLGAGMIFLKENPLFSVTGTPIKAENLKANPIGHWGTVSGQTFLYAHANRLINKYDQKMFYMGGPGHGGQAMVVPSYLDGSYTEAYPEITQDLEGMSRLFKRFSFPGGIGSHMTAQTPGSLHEGGELGYVLSHATGAILDQPEQIAFAVVGDGEAETGPLMTSWHSIKFINPKNDGAILPILDLNGFKISNPTLFARTSDVDIRKFFEGLGYSPRYIENDDIHDYMAYHKLAAEVFDKAIEDIHQIQKDAREDNRYQNGEIPAWPIVIARLPKGWGGPRYNDWSGPKFDGKGMPIEHSFRAHQVPLPLSSKNMGTLPEFVKWMTSYQPETLFNADGSLKEELRDFAPKGEMRMASNPVTNGGVDSSNLVLPDWQEFANPISENNRGKLLPDTNDNMDMNVLSKYFAEIVKLNPTRFRLFGPDETMSNRFWEMFKVTNRQWMQVIKNPNDEFISPEGRIIDSQLSEHQAEGWLEGYTLTGRTGAFASYESFLRVVDSMLTQHFKWIRQAADQKWRHDYPSLNVISTSTVFQQDHNGYTHQDPGMLTHLAEKKSDFIRQYLPADGNTLLAVFDRAFQDRSKINHIVASKQPRQQWFTKEEAEKLATDGIATIDWASTAKDGEAVDLVFASAGAEPTIETLAALHLVNEVFPQAKFRYVNVVELGRLQKKKGALNQERELSDEEFEKYFGPSGTPVIFGFHGYEDLIESIFYQRGHDGLIVHGYREDGDITTTYDMRVYSELDRFHQAIDAMQVLYVNRKVNQGLAKAFIDRMKRTLVKHFEVTRNEGVDIPDFTEWVWSDLKK</sequence>
<organism>
    <name type="scientific">Lactococcus lactis subsp. lactis (strain IL1403)</name>
    <name type="common">Streptococcus lactis</name>
    <dbReference type="NCBI Taxonomy" id="272623"/>
    <lineage>
        <taxon>Bacteria</taxon>
        <taxon>Bacillati</taxon>
        <taxon>Bacillota</taxon>
        <taxon>Bacilli</taxon>
        <taxon>Lactobacillales</taxon>
        <taxon>Streptococcaceae</taxon>
        <taxon>Lactococcus</taxon>
    </lineage>
</organism>
<accession>Q9CFH4</accession>
<gene>
    <name type="ordered locus">LL1502</name>
    <name type="ORF">L138230</name>
</gene>